<sequence>MSGRGKQGGKARAKAKSRSSRAGLQFPVGRVHRLLRKGNYAERVGAGAPVYMAAVLEYLTAEILELAGNAARDNKKTRIIPRHLQLAVRNDEELNKLLGGVTIAQGGVLPNIQAVLLPKKTESHKPGKNK</sequence>
<dbReference type="EMBL" id="U62673">
    <property type="protein sequence ID" value="AAB04767.1"/>
    <property type="molecule type" value="Genomic_DNA"/>
</dbReference>
<dbReference type="CCDS" id="CCDS38553.1"/>
<dbReference type="RefSeq" id="NP_835585.3">
    <property type="nucleotide sequence ID" value="NM_178213.4"/>
</dbReference>
<dbReference type="SMR" id="Q64522"/>
<dbReference type="BioGRID" id="548803">
    <property type="interactions" value="7"/>
</dbReference>
<dbReference type="FunCoup" id="Q64522">
    <property type="interactions" value="754"/>
</dbReference>
<dbReference type="IntAct" id="Q64522">
    <property type="interactions" value="2"/>
</dbReference>
<dbReference type="STRING" id="10090.ENSMUSP00000072858"/>
<dbReference type="GlyGen" id="Q64522">
    <property type="glycosylation" value="1 site, 1 O-linked glycan (1 site)"/>
</dbReference>
<dbReference type="iPTMnet" id="Q64522"/>
<dbReference type="PhosphoSitePlus" id="Q64522"/>
<dbReference type="SwissPalm" id="Q64522"/>
<dbReference type="jPOST" id="Q64522"/>
<dbReference type="PaxDb" id="10090-ENSMUSP00000072858"/>
<dbReference type="PeptideAtlas" id="Q64522"/>
<dbReference type="ProteomicsDB" id="271377"/>
<dbReference type="Pumba" id="Q64522"/>
<dbReference type="TopDownProteomics" id="Q64522"/>
<dbReference type="Antibodypedia" id="68019">
    <property type="antibodies" value="53 antibodies from 10 providers"/>
</dbReference>
<dbReference type="Ensembl" id="ENSMUST00000073115.5">
    <property type="protein sequence ID" value="ENSMUSP00000072858.5"/>
    <property type="gene ID" value="ENSMUSG00000063689.5"/>
</dbReference>
<dbReference type="GeneID" id="621893"/>
<dbReference type="KEGG" id="mmu:621893"/>
<dbReference type="UCSC" id="uc008qmh.2">
    <property type="organism name" value="mouse"/>
</dbReference>
<dbReference type="AGR" id="MGI:2448314"/>
<dbReference type="CTD" id="317772"/>
<dbReference type="MGI" id="MGI:2448314">
    <property type="gene designation" value="H2ac21"/>
</dbReference>
<dbReference type="VEuPathDB" id="HostDB:ENSMUSG00000063689"/>
<dbReference type="eggNOG" id="KOG1756">
    <property type="taxonomic scope" value="Eukaryota"/>
</dbReference>
<dbReference type="GeneTree" id="ENSGT00940000153118"/>
<dbReference type="HOGENOM" id="CLU_062828_3_1_1"/>
<dbReference type="InParanoid" id="Q64522"/>
<dbReference type="OMA" id="QVIMSGR"/>
<dbReference type="OrthoDB" id="9445682at2759"/>
<dbReference type="PhylomeDB" id="Q64522"/>
<dbReference type="TreeFam" id="TF300137"/>
<dbReference type="Reactome" id="R-MMU-3214815">
    <property type="pathway name" value="HDACs deacetylate histones"/>
</dbReference>
<dbReference type="Reactome" id="R-MMU-3214858">
    <property type="pathway name" value="RMTs methylate histone arginines"/>
</dbReference>
<dbReference type="Reactome" id="R-MMU-5689603">
    <property type="pathway name" value="UCH proteinases"/>
</dbReference>
<dbReference type="Reactome" id="R-MMU-5689880">
    <property type="pathway name" value="Ub-specific processing proteases"/>
</dbReference>
<dbReference type="Reactome" id="R-MMU-5689901">
    <property type="pathway name" value="Metalloprotease DUBs"/>
</dbReference>
<dbReference type="BioGRID-ORCS" id="621893">
    <property type="hits" value="7 hits in 78 CRISPR screens"/>
</dbReference>
<dbReference type="PRO" id="PR:Q64522"/>
<dbReference type="Proteomes" id="UP000000589">
    <property type="component" value="Chromosome 3"/>
</dbReference>
<dbReference type="RNAct" id="Q64522">
    <property type="molecule type" value="protein"/>
</dbReference>
<dbReference type="Bgee" id="ENSMUSG00000063689">
    <property type="expression patterns" value="Expressed in undifferentiated genital tubercle and 47 other cell types or tissues"/>
</dbReference>
<dbReference type="GO" id="GO:0000786">
    <property type="term" value="C:nucleosome"/>
    <property type="evidence" value="ECO:0007669"/>
    <property type="project" value="UniProtKB-KW"/>
</dbReference>
<dbReference type="GO" id="GO:0005634">
    <property type="term" value="C:nucleus"/>
    <property type="evidence" value="ECO:0007669"/>
    <property type="project" value="UniProtKB-SubCell"/>
</dbReference>
<dbReference type="GO" id="GO:0003677">
    <property type="term" value="F:DNA binding"/>
    <property type="evidence" value="ECO:0007669"/>
    <property type="project" value="UniProtKB-KW"/>
</dbReference>
<dbReference type="GO" id="GO:0046982">
    <property type="term" value="F:protein heterodimerization activity"/>
    <property type="evidence" value="ECO:0007669"/>
    <property type="project" value="InterPro"/>
</dbReference>
<dbReference type="GO" id="GO:0030527">
    <property type="term" value="F:structural constituent of chromatin"/>
    <property type="evidence" value="ECO:0007669"/>
    <property type="project" value="InterPro"/>
</dbReference>
<dbReference type="CDD" id="cd00074">
    <property type="entry name" value="HFD_H2A"/>
    <property type="match status" value="1"/>
</dbReference>
<dbReference type="FunFam" id="1.10.20.10:FF:000004">
    <property type="entry name" value="Histone H2A"/>
    <property type="match status" value="1"/>
</dbReference>
<dbReference type="Gene3D" id="1.10.20.10">
    <property type="entry name" value="Histone, subunit A"/>
    <property type="match status" value="1"/>
</dbReference>
<dbReference type="InterPro" id="IPR009072">
    <property type="entry name" value="Histone-fold"/>
</dbReference>
<dbReference type="InterPro" id="IPR002119">
    <property type="entry name" value="Histone_H2A"/>
</dbReference>
<dbReference type="InterPro" id="IPR007125">
    <property type="entry name" value="Histone_H2A/H2B/H3"/>
</dbReference>
<dbReference type="InterPro" id="IPR032454">
    <property type="entry name" value="Histone_H2A_C"/>
</dbReference>
<dbReference type="InterPro" id="IPR032458">
    <property type="entry name" value="Histone_H2A_CS"/>
</dbReference>
<dbReference type="PANTHER" id="PTHR23430">
    <property type="entry name" value="HISTONE H2A"/>
    <property type="match status" value="1"/>
</dbReference>
<dbReference type="Pfam" id="PF00125">
    <property type="entry name" value="Histone"/>
    <property type="match status" value="1"/>
</dbReference>
<dbReference type="Pfam" id="PF16211">
    <property type="entry name" value="Histone_H2A_C"/>
    <property type="match status" value="1"/>
</dbReference>
<dbReference type="PRINTS" id="PR00620">
    <property type="entry name" value="HISTONEH2A"/>
</dbReference>
<dbReference type="SMART" id="SM00414">
    <property type="entry name" value="H2A"/>
    <property type="match status" value="1"/>
</dbReference>
<dbReference type="SUPFAM" id="SSF47113">
    <property type="entry name" value="Histone-fold"/>
    <property type="match status" value="1"/>
</dbReference>
<dbReference type="PROSITE" id="PS00046">
    <property type="entry name" value="HISTONE_H2A"/>
    <property type="match status" value="1"/>
</dbReference>
<keyword id="KW-0007">Acetylation</keyword>
<keyword id="KW-0158">Chromosome</keyword>
<keyword id="KW-0164">Citrullination</keyword>
<keyword id="KW-0238">DNA-binding</keyword>
<keyword id="KW-0379">Hydroxylation</keyword>
<keyword id="KW-1017">Isopeptide bond</keyword>
<keyword id="KW-0488">Methylation</keyword>
<keyword id="KW-0544">Nucleosome core</keyword>
<keyword id="KW-0539">Nucleus</keyword>
<keyword id="KW-0597">Phosphoprotein</keyword>
<keyword id="KW-1185">Reference proteome</keyword>
<keyword id="KW-0832">Ubl conjugation</keyword>
<comment type="function">
    <text>Core component of nucleosome. Nucleosomes wrap and compact DNA into chromatin, limiting DNA accessibility to the cellular machineries which require DNA as a template. Histones thereby play a central role in transcription regulation, DNA repair, DNA replication and chromosomal stability. DNA accessibility is regulated via a complex set of post-translational modifications of histones, also called histone code, and nucleosome remodeling.</text>
</comment>
<comment type="subunit">
    <text>The nucleosome is a histone octamer containing two molecules each of H2A, H2B, H3 and H4 assembled in one H3-H4 heterotetramer and two H2A-H2B heterodimers. The octamer wraps approximately 147 bp of DNA.</text>
</comment>
<comment type="subcellular location">
    <subcellularLocation>
        <location>Nucleus</location>
    </subcellularLocation>
    <subcellularLocation>
        <location>Chromosome</location>
    </subcellularLocation>
</comment>
<comment type="PTM">
    <text evidence="2">Deiminated on Arg-4 in granulocytes upon calcium entry.</text>
</comment>
<comment type="PTM">
    <text evidence="2 5 6 8">Monoubiquitination of Lys-120 (H2AK119Ub) by RING1, TRIM37 and RNF2/RING2 complex gives a specific tag for epigenetic transcriptional repression and participates in X chromosome inactivation of female mammals. It is involved in the initiation of both imprinted and random X inactivation. Ubiquitinated H2A is enriched in inactive X chromosome chromatin. Ubiquitination of H2A functions downstream of methylation of 'Lys-27' of histone H3 (H3K27me). H2AK119Ub by RNF2/RING2 can also be induced by ultraviolet and may be involved in DNA repair. Following DNA double-strand breaks (DSBs), it is ubiquitinated through 'Lys-63' linkage of ubiquitin moieties by the E2 ligase UBE2N and the E3 ligases RNF8 and RNF168, leading to the recruitment of repair proteins to sites of DNA damage. Ubiquitination at Lys-14 and Lys-16 (H2AK13Ub and H2AK15Ub, respectively) in response to DNA damage is initiated by RNF168 that mediates monoubiquitination at these 2 sites, and 'Lys-63'-linked ubiquitin are then conjugated to monoubiquitin; RNF8 is able to extend 'Lys-63'-linked ubiquitin chains in vitro. Deubiquitinated by USP51 at Lys-14 and Lys-16 (H2AK13Ub and H2AK15Ub, respectively) after damaged DNA is repaired (By similarity). H2AK119Ub and ionizing radiation-induced 'Lys-63'-linked ubiquitination (H2AK13Ub and H2AK15Ub) are distinct events.</text>
</comment>
<comment type="PTM">
    <text evidence="2">Phosphorylation on Ser-2 (H2AS1ph) is enhanced during mitosis. Phosphorylation on Ser-2 by RPS6KA5/MSK1 directly represses transcription. Acetylation of H3 inhibits Ser-2 phosphorylation by RPS6KA5/MSK1. Phosphorylation at Thr-121 (H2AT120ph) by DCAF1 is present in the regulatory region of many tumor suppresor genes and down-regulates their transcription.</text>
</comment>
<comment type="PTM">
    <text evidence="7">Symmetric dimethylation on Arg-4 by the PRDM1/PRMT5 complex may play a crucial role in the germ-cell lineage.</text>
</comment>
<comment type="PTM">
    <text evidence="8">Glutamine methylation at Gln-105 (H2AQ104me) by FBL is specifically dedicated to polymerase I. It is present at 35S ribosomal DNA locus and impairs binding of the FACT complex.</text>
</comment>
<comment type="PTM">
    <text evidence="2">Crotonylation (Kcr) is specifically present in male germ cells and marks testis-specific genes in post-meiotic cells, including X-linked genes that escape sex chromosome inactivation in haploid cells. Crotonylation marks active promoters and enhancers and confers resistance to transcriptional repressors. It is also associated with post-meiotically activated genes on autosomes.</text>
</comment>
<comment type="PTM">
    <text evidence="10">Hydroxybutyrylation of histones is induced by starvation.</text>
</comment>
<comment type="PTM">
    <text evidence="1">Lactylated in macrophages by EP300/P300 by using lactoyl-CoA directly derived from endogenous or exogenous lactate, leading to stimulates gene transcription.</text>
</comment>
<comment type="similarity">
    <text evidence="11">Belongs to the histone H2A family.</text>
</comment>
<accession>Q64522</accession>
<gene>
    <name evidence="13" type="primary">H2ac21</name>
    <name evidence="13" type="synonym">Hist2h2ab</name>
</gene>
<evidence type="ECO:0000250" key="1">
    <source>
        <dbReference type="UniProtKB" id="P0C0S5"/>
    </source>
</evidence>
<evidence type="ECO:0000250" key="2">
    <source>
        <dbReference type="UniProtKB" id="P0C0S8"/>
    </source>
</evidence>
<evidence type="ECO:0000250" key="3">
    <source>
        <dbReference type="UniProtKB" id="Q8IUE6"/>
    </source>
</evidence>
<evidence type="ECO:0000256" key="4">
    <source>
        <dbReference type="SAM" id="MobiDB-lite"/>
    </source>
</evidence>
<evidence type="ECO:0000269" key="5">
    <source>
    </source>
</evidence>
<evidence type="ECO:0000269" key="6">
    <source>
    </source>
</evidence>
<evidence type="ECO:0000269" key="7">
    <source>
    </source>
</evidence>
<evidence type="ECO:0000269" key="8">
    <source>
    </source>
</evidence>
<evidence type="ECO:0000269" key="9">
    <source>
    </source>
</evidence>
<evidence type="ECO:0000269" key="10">
    <source>
    </source>
</evidence>
<evidence type="ECO:0000305" key="11"/>
<evidence type="ECO:0000305" key="12">
    <source>
    </source>
</evidence>
<evidence type="ECO:0000312" key="13">
    <source>
        <dbReference type="MGI" id="MGI:2448314"/>
    </source>
</evidence>
<proteinExistence type="evidence at protein level"/>
<protein>
    <recommendedName>
        <fullName>Histone H2A type 2-B</fullName>
    </recommendedName>
    <alternativeName>
        <fullName evidence="13">H2A-clustered histone 21</fullName>
    </alternativeName>
    <alternativeName>
        <fullName>H2a-613A</fullName>
    </alternativeName>
</protein>
<feature type="initiator methionine" description="Removed" evidence="3">
    <location>
        <position position="1"/>
    </location>
</feature>
<feature type="chain" id="PRO_0000227506" description="Histone H2A type 2-B">
    <location>
        <begin position="2"/>
        <end position="130"/>
    </location>
</feature>
<feature type="region of interest" description="Disordered" evidence="4">
    <location>
        <begin position="1"/>
        <end position="22"/>
    </location>
</feature>
<feature type="compositionally biased region" description="Basic residues" evidence="4">
    <location>
        <begin position="7"/>
        <end position="19"/>
    </location>
</feature>
<feature type="modified residue" description="N-acetylserine" evidence="3">
    <location>
        <position position="2"/>
    </location>
</feature>
<feature type="modified residue" description="Phosphoserine; by RPS6KA5" evidence="3">
    <location>
        <position position="2"/>
    </location>
</feature>
<feature type="modified residue" description="Citrulline; alternate" evidence="2">
    <location>
        <position position="4"/>
    </location>
</feature>
<feature type="modified residue" description="Symmetric dimethylarginine; by PRMT5; alternate" evidence="12">
    <location>
        <position position="4"/>
    </location>
</feature>
<feature type="modified residue" description="N6-(2-hydroxyisobutyryl)lysine; alternate" evidence="9">
    <location>
        <position position="6"/>
    </location>
</feature>
<feature type="modified residue" description="N6-(beta-hydroxybutyryl)lysine; alternate" evidence="10">
    <location>
        <position position="6"/>
    </location>
</feature>
<feature type="modified residue" description="N6-(2-hydroxyisobutyryl)lysine; alternate" evidence="9">
    <location>
        <position position="10"/>
    </location>
</feature>
<feature type="modified residue" description="N6-lactoyllysine; alternate" evidence="1">
    <location>
        <position position="10"/>
    </location>
</feature>
<feature type="modified residue" description="N6-succinyllysine; alternate" evidence="3">
    <location>
        <position position="10"/>
    </location>
</feature>
<feature type="modified residue" description="N6-(2-hydroxyisobutyryl)lysine; alternate" evidence="9">
    <location>
        <position position="37"/>
    </location>
</feature>
<feature type="modified residue" description="N6-(beta-hydroxybutyryl)lysine; alternate" evidence="10">
    <location>
        <position position="37"/>
    </location>
</feature>
<feature type="modified residue" description="N6-crotonyllysine; alternate" evidence="2">
    <location>
        <position position="37"/>
    </location>
</feature>
<feature type="modified residue" description="N6-(2-hydroxyisobutyryl)lysine" evidence="9">
    <location>
        <position position="75"/>
    </location>
</feature>
<feature type="modified residue" description="N6-(2-hydroxyisobutyryl)lysine" evidence="9">
    <location>
        <position position="76"/>
    </location>
</feature>
<feature type="modified residue" description="N6-(2-hydroxyisobutyryl)lysine; alternate" evidence="9">
    <location>
        <position position="96"/>
    </location>
</feature>
<feature type="modified residue" description="N6-glutaryllysine; alternate" evidence="2">
    <location>
        <position position="96"/>
    </location>
</feature>
<feature type="modified residue" description="N6-succinyllysine; alternate" evidence="3">
    <location>
        <position position="96"/>
    </location>
</feature>
<feature type="modified residue" description="N5-methylglutamine" evidence="8">
    <location>
        <position position="105"/>
    </location>
</feature>
<feature type="modified residue" description="N6-(2-hydroxyisobutyryl)lysine; alternate" evidence="9">
    <location>
        <position position="119"/>
    </location>
</feature>
<feature type="modified residue" description="N6-crotonyllysine; alternate" evidence="2">
    <location>
        <position position="119"/>
    </location>
</feature>
<feature type="modified residue" description="N6-glutaryllysine; alternate" evidence="2">
    <location>
        <position position="119"/>
    </location>
</feature>
<feature type="modified residue" description="N6-(beta-hydroxybutyryl)lysine; alternate" evidence="10">
    <location>
        <position position="120"/>
    </location>
</feature>
<feature type="modified residue" description="N6-crotonyllysine; alternate" evidence="2">
    <location>
        <position position="120"/>
    </location>
</feature>
<feature type="modified residue" description="N6-glutaryllysine; alternate" evidence="2">
    <location>
        <position position="120"/>
    </location>
</feature>
<feature type="modified residue" description="Phosphothreonine; by DCAF1" evidence="3">
    <location>
        <position position="121"/>
    </location>
</feature>
<feature type="cross-link" description="Glycyl lysine isopeptide (Lys-Gly) (interchain with G-Cter in ubiquitin)" evidence="3">
    <location>
        <position position="14"/>
    </location>
</feature>
<feature type="cross-link" description="Glycyl lysine isopeptide (Lys-Gly) (interchain with G-Cter in ubiquitin)" evidence="3">
    <location>
        <position position="16"/>
    </location>
</feature>
<feature type="cross-link" description="Glycyl lysine isopeptide (Lys-Gly) (interchain with G-Cter in ubiquitin); alternate" evidence="5 6">
    <location>
        <position position="120"/>
    </location>
</feature>
<organism>
    <name type="scientific">Mus musculus</name>
    <name type="common">Mouse</name>
    <dbReference type="NCBI Taxonomy" id="10090"/>
    <lineage>
        <taxon>Eukaryota</taxon>
        <taxon>Metazoa</taxon>
        <taxon>Chordata</taxon>
        <taxon>Craniata</taxon>
        <taxon>Vertebrata</taxon>
        <taxon>Euteleostomi</taxon>
        <taxon>Mammalia</taxon>
        <taxon>Eutheria</taxon>
        <taxon>Euarchontoglires</taxon>
        <taxon>Glires</taxon>
        <taxon>Rodentia</taxon>
        <taxon>Myomorpha</taxon>
        <taxon>Muroidea</taxon>
        <taxon>Muridae</taxon>
        <taxon>Murinae</taxon>
        <taxon>Mus</taxon>
        <taxon>Mus</taxon>
    </lineage>
</organism>
<name>H2A2B_MOUSE</name>
<reference key="1">
    <citation type="journal article" date="1996" name="Genome Res.">
        <title>Characterization of the 55-kb mouse histone gene cluster on chromosome 3.</title>
        <authorList>
            <person name="Wang Z.-F."/>
            <person name="Tisovec R."/>
            <person name="Debry R.W."/>
            <person name="Frey M.R."/>
            <person name="Matera A.G."/>
            <person name="Marzluff W.F."/>
        </authorList>
    </citation>
    <scope>NUCLEOTIDE SEQUENCE [GENOMIC DNA]</scope>
    <source>
        <strain>129</strain>
    </source>
</reference>
<reference key="2">
    <citation type="journal article" date="2004" name="Dev. Cell">
        <title>Polycomb group proteins Ring1A/B link ubiquitylation of histone H2A to heritable gene silencing and X inactivation.</title>
        <authorList>
            <person name="de Napoles M."/>
            <person name="Mermoud J.E."/>
            <person name="Wakao R."/>
            <person name="Tang Y.A."/>
            <person name="Endoh M."/>
            <person name="Appanah R."/>
            <person name="Nesterova T.B."/>
            <person name="Silva J."/>
            <person name="Otte A.P."/>
            <person name="Vidal M."/>
            <person name="Koseki H."/>
            <person name="Brockdorff N."/>
        </authorList>
    </citation>
    <scope>UBIQUITINATION AT LYS-120</scope>
</reference>
<reference key="3">
    <citation type="journal article" date="2004" name="J. Biol. Chem.">
        <title>Ring1b-mediated H2A ubiquitination associates with inactive X chromosomes and is involved in initiation of X inactivation.</title>
        <authorList>
            <person name="Fang J."/>
            <person name="Chen T."/>
            <person name="Chadwick B."/>
            <person name="Li E."/>
            <person name="Zhang Y."/>
        </authorList>
    </citation>
    <scope>UBIQUITINATION AT LYS-120</scope>
</reference>
<reference key="4">
    <citation type="journal article" date="2006" name="Nat. Cell Biol.">
        <title>Blimp1 associates with Prmt5 and directs histone arginine methylation in mouse germ cells.</title>
        <authorList>
            <person name="Ancelin K."/>
            <person name="Lange U.C."/>
            <person name="Hajkova P."/>
            <person name="Schneider R."/>
            <person name="Bannister A.J."/>
            <person name="Kouzarides T."/>
            <person name="Surani M.A."/>
        </authorList>
    </citation>
    <scope>METHYLATION AT ARG-4</scope>
</reference>
<reference key="5">
    <citation type="journal article" date="2014" name="Nat. Chem. Biol.">
        <title>Lysine 2-hydroxyisobutyrylation is a widely distributed active histone mark.</title>
        <authorList>
            <person name="Dai L."/>
            <person name="Peng C."/>
            <person name="Montellier E."/>
            <person name="Lu Z."/>
            <person name="Chen Y."/>
            <person name="Ishii H."/>
            <person name="Debernardi A."/>
            <person name="Buchou T."/>
            <person name="Rousseaux S."/>
            <person name="Jin F."/>
            <person name="Sabari B.R."/>
            <person name="Deng Z."/>
            <person name="Allis C.D."/>
            <person name="Ren B."/>
            <person name="Khochbin S."/>
            <person name="Zhao Y."/>
        </authorList>
    </citation>
    <scope>HYDROXYBUTYRYLATION AT LYS-6; LYS-10; LYS-37; LYS-75; LYS-76; LYS-96 AND LYS-119</scope>
</reference>
<reference key="6">
    <citation type="journal article" date="2014" name="Nature">
        <title>Glutamine methylation in histone H2A is an RNA-polymerase-I-dedicated modification.</title>
        <authorList>
            <person name="Tessarz P."/>
            <person name="Santos-Rosa H."/>
            <person name="Robson S.C."/>
            <person name="Sylvestersen K.B."/>
            <person name="Nelson C.J."/>
            <person name="Nielsen M.L."/>
            <person name="Kouzarides T."/>
        </authorList>
    </citation>
    <scope>METHYLATION AT GLN-105</scope>
</reference>
<reference key="7">
    <citation type="journal article" date="2016" name="Mol. Cell">
        <title>Metabolic regulation of gene expression by histone lysine beta-hydroxybutyrylation.</title>
        <authorList>
            <person name="Xie Z."/>
            <person name="Zhang D."/>
            <person name="Chung D."/>
            <person name="Tang Z."/>
            <person name="Huang H."/>
            <person name="Dai L."/>
            <person name="Qi S."/>
            <person name="Li J."/>
            <person name="Colak G."/>
            <person name="Chen Y."/>
            <person name="Xia C."/>
            <person name="Peng C."/>
            <person name="Ruan H."/>
            <person name="Kirkey M."/>
            <person name="Wang D."/>
            <person name="Jensen L.M."/>
            <person name="Kwon O.K."/>
            <person name="Lee S."/>
            <person name="Pletcher S.D."/>
            <person name="Tan M."/>
            <person name="Lombard D.B."/>
            <person name="White K.P."/>
            <person name="Zhao H."/>
            <person name="Li J."/>
            <person name="Roeder R.G."/>
            <person name="Yang X."/>
            <person name="Zhao Y."/>
        </authorList>
    </citation>
    <scope>HYDROXYBUTYRYLATION AT LYS-6; LYS-37 AND LYS-120</scope>
</reference>